<dbReference type="EMBL" id="AE014298">
    <property type="protein sequence ID" value="AAF48900.3"/>
    <property type="molecule type" value="Genomic_DNA"/>
</dbReference>
<dbReference type="EMBL" id="AE014298">
    <property type="protein sequence ID" value="AAF48899.2"/>
    <property type="molecule type" value="Genomic_DNA"/>
</dbReference>
<dbReference type="EMBL" id="AE014298">
    <property type="protein sequence ID" value="QCD25244.1"/>
    <property type="molecule type" value="Genomic_DNA"/>
</dbReference>
<dbReference type="EMBL" id="AY060485">
    <property type="protein sequence ID" value="AAL25524.1"/>
    <property type="status" value="ALT_INIT"/>
    <property type="molecule type" value="mRNA"/>
</dbReference>
<dbReference type="RefSeq" id="NP_573336.3">
    <molecule id="Q9VWN9-2"/>
    <property type="nucleotide sequence ID" value="NM_133108.3"/>
</dbReference>
<dbReference type="RefSeq" id="NP_652493.2">
    <molecule id="Q9VWN9-1"/>
    <property type="nucleotide sequence ID" value="NM_144236.3"/>
</dbReference>
<dbReference type="SMR" id="Q9VWN9"/>
<dbReference type="FunCoup" id="Q9VWN9">
    <property type="interactions" value="723"/>
</dbReference>
<dbReference type="IntAct" id="Q9VWN9">
    <property type="interactions" value="2"/>
</dbReference>
<dbReference type="STRING" id="7227.FBpp0423174"/>
<dbReference type="GlyGen" id="Q9VWN9">
    <property type="glycosylation" value="1 site"/>
</dbReference>
<dbReference type="PaxDb" id="7227-FBpp0111565"/>
<dbReference type="EnsemblMetazoa" id="FBtr0112653">
    <molecule id="Q9VWN9-1"/>
    <property type="protein sequence ID" value="FBpp0111565"/>
    <property type="gene ID" value="FBgn0085430"/>
</dbReference>
<dbReference type="EnsemblMetazoa" id="FBtr0333160">
    <molecule id="Q9VWN9-2"/>
    <property type="protein sequence ID" value="FBpp0305363"/>
    <property type="gene ID" value="FBgn0085430"/>
</dbReference>
<dbReference type="GeneID" id="50356"/>
<dbReference type="KEGG" id="dme:Dmel_CG34401"/>
<dbReference type="UCSC" id="CG34401-RA">
    <molecule id="Q9VWN9-1"/>
    <property type="organism name" value="d. melanogaster"/>
</dbReference>
<dbReference type="AGR" id="FB:FBgn0085430"/>
<dbReference type="CTD" id="50356"/>
<dbReference type="FlyBase" id="FBgn0085430">
    <property type="gene designation" value="Dora"/>
</dbReference>
<dbReference type="VEuPathDB" id="VectorBase:FBgn0085430"/>
<dbReference type="eggNOG" id="KOG3615">
    <property type="taxonomic scope" value="Eukaryota"/>
</dbReference>
<dbReference type="GeneTree" id="ENSGT00940000156999"/>
<dbReference type="HOGENOM" id="CLU_001052_0_0_1"/>
<dbReference type="InParanoid" id="Q9VWN9"/>
<dbReference type="OMA" id="HNLSYPP"/>
<dbReference type="OrthoDB" id="10013584at2759"/>
<dbReference type="PhylomeDB" id="Q9VWN9"/>
<dbReference type="UniPathway" id="UPA00143"/>
<dbReference type="BioGRID-ORCS" id="50356">
    <property type="hits" value="1 hit in 3 CRISPR screens"/>
</dbReference>
<dbReference type="ChiTaRS" id="CG34401">
    <property type="organism name" value="fly"/>
</dbReference>
<dbReference type="GenomeRNAi" id="50356"/>
<dbReference type="PRO" id="PR:Q9VWN9"/>
<dbReference type="Proteomes" id="UP000000803">
    <property type="component" value="Chromosome X"/>
</dbReference>
<dbReference type="Bgee" id="FBgn0085430">
    <property type="expression patterns" value="Expressed in distal medullary amacrine neuron Dm11 in insect head and 282 other cell types or tissues"/>
</dbReference>
<dbReference type="ExpressionAtlas" id="Q9VWN9">
    <property type="expression patterns" value="baseline and differential"/>
</dbReference>
<dbReference type="GO" id="GO:0031462">
    <property type="term" value="C:Cul2-RING ubiquitin ligase complex"/>
    <property type="evidence" value="ECO:0000318"/>
    <property type="project" value="GO_Central"/>
</dbReference>
<dbReference type="GO" id="GO:1990756">
    <property type="term" value="F:ubiquitin-like ligase-substrate adaptor activity"/>
    <property type="evidence" value="ECO:0000250"/>
    <property type="project" value="FlyBase"/>
</dbReference>
<dbReference type="GO" id="GO:0008270">
    <property type="term" value="F:zinc ion binding"/>
    <property type="evidence" value="ECO:0007669"/>
    <property type="project" value="UniProtKB-KW"/>
</dbReference>
<dbReference type="GO" id="GO:2000627">
    <property type="term" value="P:positive regulation of miRNA catabolic process"/>
    <property type="evidence" value="ECO:0000315"/>
    <property type="project" value="UniProtKB"/>
</dbReference>
<dbReference type="GO" id="GO:0016567">
    <property type="term" value="P:protein ubiquitination"/>
    <property type="evidence" value="ECO:0007669"/>
    <property type="project" value="UniProtKB-UniPathway"/>
</dbReference>
<dbReference type="GO" id="GO:0140958">
    <property type="term" value="P:target-directed miRNA degradation"/>
    <property type="evidence" value="ECO:0000315"/>
    <property type="project" value="FlyBase"/>
</dbReference>
<dbReference type="InterPro" id="IPR007527">
    <property type="entry name" value="Znf_SWIM"/>
</dbReference>
<dbReference type="InterPro" id="IPR048370">
    <property type="entry name" value="ZSWIM4-8_C"/>
</dbReference>
<dbReference type="PANTHER" id="PTHR22619">
    <property type="entry name" value="ZINC FINGER SWIM DOMAIN CONTAINING PROTEIN 4, 5, 6"/>
    <property type="match status" value="1"/>
</dbReference>
<dbReference type="PANTHER" id="PTHR22619:SF1">
    <property type="entry name" value="ZINC FINGER SWIM DOMAIN-CONTAINING PROTEIN 8"/>
    <property type="match status" value="1"/>
</dbReference>
<dbReference type="Pfam" id="PF04434">
    <property type="entry name" value="SWIM"/>
    <property type="match status" value="1"/>
</dbReference>
<dbReference type="Pfam" id="PF21055">
    <property type="entry name" value="ZSWIM4-8_C"/>
    <property type="match status" value="1"/>
</dbReference>
<dbReference type="PROSITE" id="PS50966">
    <property type="entry name" value="ZF_SWIM"/>
    <property type="match status" value="1"/>
</dbReference>
<gene>
    <name evidence="5 7" type="primary">Dora</name>
    <name evidence="7" type="ORF">CG34401</name>
</gene>
<protein>
    <recommendedName>
        <fullName evidence="6">Zinc finger SWIM domain-containing protein 8 homolog</fullName>
    </recommendedName>
    <alternativeName>
        <fullName evidence="5">Protein dorado</fullName>
    </alternativeName>
</protein>
<comment type="function">
    <text evidence="1 4">Substrate recognition component of a SCF-like E3 ubiquitin-protein ligase complex that promotes target-directed microRNA degradation (TDMD), a process that mediates degradation of microRNAs (miRNAs) (PubMed:33184237). The SCF-like E3 ubiquitin-protein ligase complex acts by catalyzing ubiquitination and subsequent degradation of AGO1, thereby exposing miRNAs for degradation (By similarity).</text>
</comment>
<comment type="pathway">
    <text evidence="1">Protein modification; protein ubiquitination.</text>
</comment>
<comment type="subunit">
    <text evidence="1">Component of the SCF-like E3 ubiquitin-protein ligase complex.</text>
</comment>
<comment type="alternative products">
    <event type="alternative splicing"/>
    <isoform>
        <id>Q9VWN9-1</id>
        <name>1</name>
        <sequence type="displayed"/>
    </isoform>
    <isoform>
        <id>Q9VWN9-2</id>
        <name>B</name>
        <sequence type="described" ref="VSP_060925"/>
    </isoform>
    <isoform>
        <id>Q9VWN9-3</id>
        <name>C</name>
        <sequence type="described" ref="VSP_060926"/>
    </isoform>
</comment>
<comment type="similarity">
    <text evidence="6">Belongs to the ZSWIM8 family.</text>
</comment>
<comment type="sequence caution" evidence="6">
    <conflict type="erroneous initiation">
        <sequence resource="EMBL-CDS" id="AAL25524"/>
    </conflict>
    <text>Truncated N-terminus.</text>
</comment>
<accession>Q9VWN9</accession>
<accession>A0A4D6K2F2</accession>
<accession>Q95ST9</accession>
<accession>R9PY27</accession>
<evidence type="ECO:0000250" key="1">
    <source>
        <dbReference type="UniProtKB" id="A7E2V4"/>
    </source>
</evidence>
<evidence type="ECO:0000255" key="2">
    <source>
        <dbReference type="PROSITE-ProRule" id="PRU00325"/>
    </source>
</evidence>
<evidence type="ECO:0000256" key="3">
    <source>
        <dbReference type="SAM" id="MobiDB-lite"/>
    </source>
</evidence>
<evidence type="ECO:0000269" key="4">
    <source>
    </source>
</evidence>
<evidence type="ECO:0000303" key="5">
    <source>
    </source>
</evidence>
<evidence type="ECO:0000305" key="6"/>
<evidence type="ECO:0000312" key="7">
    <source>
        <dbReference type="FlyBase" id="FBgn0085430"/>
    </source>
</evidence>
<reference key="1">
    <citation type="journal article" date="2000" name="Science">
        <title>The genome sequence of Drosophila melanogaster.</title>
        <authorList>
            <person name="Adams M.D."/>
            <person name="Celniker S.E."/>
            <person name="Holt R.A."/>
            <person name="Evans C.A."/>
            <person name="Gocayne J.D."/>
            <person name="Amanatides P.G."/>
            <person name="Scherer S.E."/>
            <person name="Li P.W."/>
            <person name="Hoskins R.A."/>
            <person name="Galle R.F."/>
            <person name="George R.A."/>
            <person name="Lewis S.E."/>
            <person name="Richards S."/>
            <person name="Ashburner M."/>
            <person name="Henderson S.N."/>
            <person name="Sutton G.G."/>
            <person name="Wortman J.R."/>
            <person name="Yandell M.D."/>
            <person name="Zhang Q."/>
            <person name="Chen L.X."/>
            <person name="Brandon R.C."/>
            <person name="Rogers Y.-H.C."/>
            <person name="Blazej R.G."/>
            <person name="Champe M."/>
            <person name="Pfeiffer B.D."/>
            <person name="Wan K.H."/>
            <person name="Doyle C."/>
            <person name="Baxter E.G."/>
            <person name="Helt G."/>
            <person name="Nelson C.R."/>
            <person name="Miklos G.L.G."/>
            <person name="Abril J.F."/>
            <person name="Agbayani A."/>
            <person name="An H.-J."/>
            <person name="Andrews-Pfannkoch C."/>
            <person name="Baldwin D."/>
            <person name="Ballew R.M."/>
            <person name="Basu A."/>
            <person name="Baxendale J."/>
            <person name="Bayraktaroglu L."/>
            <person name="Beasley E.M."/>
            <person name="Beeson K.Y."/>
            <person name="Benos P.V."/>
            <person name="Berman B.P."/>
            <person name="Bhandari D."/>
            <person name="Bolshakov S."/>
            <person name="Borkova D."/>
            <person name="Botchan M.R."/>
            <person name="Bouck J."/>
            <person name="Brokstein P."/>
            <person name="Brottier P."/>
            <person name="Burtis K.C."/>
            <person name="Busam D.A."/>
            <person name="Butler H."/>
            <person name="Cadieu E."/>
            <person name="Center A."/>
            <person name="Chandra I."/>
            <person name="Cherry J.M."/>
            <person name="Cawley S."/>
            <person name="Dahlke C."/>
            <person name="Davenport L.B."/>
            <person name="Davies P."/>
            <person name="de Pablos B."/>
            <person name="Delcher A."/>
            <person name="Deng Z."/>
            <person name="Mays A.D."/>
            <person name="Dew I."/>
            <person name="Dietz S.M."/>
            <person name="Dodson K."/>
            <person name="Doup L.E."/>
            <person name="Downes M."/>
            <person name="Dugan-Rocha S."/>
            <person name="Dunkov B.C."/>
            <person name="Dunn P."/>
            <person name="Durbin K.J."/>
            <person name="Evangelista C.C."/>
            <person name="Ferraz C."/>
            <person name="Ferriera S."/>
            <person name="Fleischmann W."/>
            <person name="Fosler C."/>
            <person name="Gabrielian A.E."/>
            <person name="Garg N.S."/>
            <person name="Gelbart W.M."/>
            <person name="Glasser K."/>
            <person name="Glodek A."/>
            <person name="Gong F."/>
            <person name="Gorrell J.H."/>
            <person name="Gu Z."/>
            <person name="Guan P."/>
            <person name="Harris M."/>
            <person name="Harris N.L."/>
            <person name="Harvey D.A."/>
            <person name="Heiman T.J."/>
            <person name="Hernandez J.R."/>
            <person name="Houck J."/>
            <person name="Hostin D."/>
            <person name="Houston K.A."/>
            <person name="Howland T.J."/>
            <person name="Wei M.-H."/>
            <person name="Ibegwam C."/>
            <person name="Jalali M."/>
            <person name="Kalush F."/>
            <person name="Karpen G.H."/>
            <person name="Ke Z."/>
            <person name="Kennison J.A."/>
            <person name="Ketchum K.A."/>
            <person name="Kimmel B.E."/>
            <person name="Kodira C.D."/>
            <person name="Kraft C.L."/>
            <person name="Kravitz S."/>
            <person name="Kulp D."/>
            <person name="Lai Z."/>
            <person name="Lasko P."/>
            <person name="Lei Y."/>
            <person name="Levitsky A.A."/>
            <person name="Li J.H."/>
            <person name="Li Z."/>
            <person name="Liang Y."/>
            <person name="Lin X."/>
            <person name="Liu X."/>
            <person name="Mattei B."/>
            <person name="McIntosh T.C."/>
            <person name="McLeod M.P."/>
            <person name="McPherson D."/>
            <person name="Merkulov G."/>
            <person name="Milshina N.V."/>
            <person name="Mobarry C."/>
            <person name="Morris J."/>
            <person name="Moshrefi A."/>
            <person name="Mount S.M."/>
            <person name="Moy M."/>
            <person name="Murphy B."/>
            <person name="Murphy L."/>
            <person name="Muzny D.M."/>
            <person name="Nelson D.L."/>
            <person name="Nelson D.R."/>
            <person name="Nelson K.A."/>
            <person name="Nixon K."/>
            <person name="Nusskern D.R."/>
            <person name="Pacleb J.M."/>
            <person name="Palazzolo M."/>
            <person name="Pittman G.S."/>
            <person name="Pan S."/>
            <person name="Pollard J."/>
            <person name="Puri V."/>
            <person name="Reese M.G."/>
            <person name="Reinert K."/>
            <person name="Remington K."/>
            <person name="Saunders R.D.C."/>
            <person name="Scheeler F."/>
            <person name="Shen H."/>
            <person name="Shue B.C."/>
            <person name="Siden-Kiamos I."/>
            <person name="Simpson M."/>
            <person name="Skupski M.P."/>
            <person name="Smith T.J."/>
            <person name="Spier E."/>
            <person name="Spradling A.C."/>
            <person name="Stapleton M."/>
            <person name="Strong R."/>
            <person name="Sun E."/>
            <person name="Svirskas R."/>
            <person name="Tector C."/>
            <person name="Turner R."/>
            <person name="Venter E."/>
            <person name="Wang A.H."/>
            <person name="Wang X."/>
            <person name="Wang Z.-Y."/>
            <person name="Wassarman D.A."/>
            <person name="Weinstock G.M."/>
            <person name="Weissenbach J."/>
            <person name="Williams S.M."/>
            <person name="Woodage T."/>
            <person name="Worley K.C."/>
            <person name="Wu D."/>
            <person name="Yang S."/>
            <person name="Yao Q.A."/>
            <person name="Ye J."/>
            <person name="Yeh R.-F."/>
            <person name="Zaveri J.S."/>
            <person name="Zhan M."/>
            <person name="Zhang G."/>
            <person name="Zhao Q."/>
            <person name="Zheng L."/>
            <person name="Zheng X.H."/>
            <person name="Zhong F.N."/>
            <person name="Zhong W."/>
            <person name="Zhou X."/>
            <person name="Zhu S.C."/>
            <person name="Zhu X."/>
            <person name="Smith H.O."/>
            <person name="Gibbs R.A."/>
            <person name="Myers E.W."/>
            <person name="Rubin G.M."/>
            <person name="Venter J.C."/>
        </authorList>
    </citation>
    <scope>NUCLEOTIDE SEQUENCE [LARGE SCALE GENOMIC DNA]</scope>
    <source>
        <strain>Berkeley</strain>
    </source>
</reference>
<reference key="2">
    <citation type="journal article" date="2002" name="Genome Biol.">
        <title>Annotation of the Drosophila melanogaster euchromatic genome: a systematic review.</title>
        <authorList>
            <person name="Misra S."/>
            <person name="Crosby M.A."/>
            <person name="Mungall C.J."/>
            <person name="Matthews B.B."/>
            <person name="Campbell K.S."/>
            <person name="Hradecky P."/>
            <person name="Huang Y."/>
            <person name="Kaminker J.S."/>
            <person name="Millburn G.H."/>
            <person name="Prochnik S.E."/>
            <person name="Smith C.D."/>
            <person name="Tupy J.L."/>
            <person name="Whitfield E.J."/>
            <person name="Bayraktaroglu L."/>
            <person name="Berman B.P."/>
            <person name="Bettencourt B.R."/>
            <person name="Celniker S.E."/>
            <person name="de Grey A.D.N.J."/>
            <person name="Drysdale R.A."/>
            <person name="Harris N.L."/>
            <person name="Richter J."/>
            <person name="Russo S."/>
            <person name="Schroeder A.J."/>
            <person name="Shu S.Q."/>
            <person name="Stapleton M."/>
            <person name="Yamada C."/>
            <person name="Ashburner M."/>
            <person name="Gelbart W.M."/>
            <person name="Rubin G.M."/>
            <person name="Lewis S.E."/>
        </authorList>
    </citation>
    <scope>GENOME REANNOTATION</scope>
    <source>
        <strain>Berkeley</strain>
    </source>
</reference>
<reference key="3">
    <citation type="journal article" date="2002" name="Genome Biol.">
        <title>A Drosophila full-length cDNA resource.</title>
        <authorList>
            <person name="Stapleton M."/>
            <person name="Carlson J.W."/>
            <person name="Brokstein P."/>
            <person name="Yu C."/>
            <person name="Champe M."/>
            <person name="George R.A."/>
            <person name="Guarin H."/>
            <person name="Kronmiller B."/>
            <person name="Pacleb J.M."/>
            <person name="Park S."/>
            <person name="Wan K.H."/>
            <person name="Rubin G.M."/>
            <person name="Celniker S.E."/>
        </authorList>
    </citation>
    <scope>NUCLEOTIDE SEQUENCE [LARGE SCALE MRNA] OF 1345-2103</scope>
    <source>
        <strain>Berkeley</strain>
        <tissue>Embryo</tissue>
    </source>
</reference>
<reference key="4">
    <citation type="journal article" date="2020" name="Science">
        <title>The ZSWIM8 ubiquitin ligase mediates target-directed microRNA degradation.</title>
        <authorList>
            <person name="Shi C.Y."/>
            <person name="Kingston E.R."/>
            <person name="Kleaveland B."/>
            <person name="Lin D.H."/>
            <person name="Stubna M.W."/>
            <person name="Bartel D.P."/>
        </authorList>
    </citation>
    <scope>FUNCTION</scope>
</reference>
<keyword id="KW-0025">Alternative splicing</keyword>
<keyword id="KW-0479">Metal-binding</keyword>
<keyword id="KW-1185">Reference proteome</keyword>
<keyword id="KW-0833">Ubl conjugation pathway</keyword>
<keyword id="KW-0862">Zinc</keyword>
<keyword id="KW-0863">Zinc-finger</keyword>
<name>ZSWM8_DROME</name>
<organism>
    <name type="scientific">Drosophila melanogaster</name>
    <name type="common">Fruit fly</name>
    <dbReference type="NCBI Taxonomy" id="7227"/>
    <lineage>
        <taxon>Eukaryota</taxon>
        <taxon>Metazoa</taxon>
        <taxon>Ecdysozoa</taxon>
        <taxon>Arthropoda</taxon>
        <taxon>Hexapoda</taxon>
        <taxon>Insecta</taxon>
        <taxon>Pterygota</taxon>
        <taxon>Neoptera</taxon>
        <taxon>Endopterygota</taxon>
        <taxon>Diptera</taxon>
        <taxon>Brachycera</taxon>
        <taxon>Muscomorpha</taxon>
        <taxon>Ephydroidea</taxon>
        <taxon>Drosophilidae</taxon>
        <taxon>Drosophila</taxon>
        <taxon>Sophophora</taxon>
    </lineage>
</organism>
<feature type="chain" id="PRO_0000452204" description="Zinc finger SWIM domain-containing protein 8 homolog">
    <location>
        <begin position="1"/>
        <end position="2103"/>
    </location>
</feature>
<feature type="zinc finger region" description="SWIM-type" evidence="2">
    <location>
        <begin position="191"/>
        <end position="227"/>
    </location>
</feature>
<feature type="region of interest" description="Disordered" evidence="3">
    <location>
        <begin position="684"/>
        <end position="860"/>
    </location>
</feature>
<feature type="region of interest" description="Disordered" evidence="3">
    <location>
        <begin position="1237"/>
        <end position="1262"/>
    </location>
</feature>
<feature type="region of interest" description="Disordered" evidence="3">
    <location>
        <begin position="1310"/>
        <end position="1399"/>
    </location>
</feature>
<feature type="region of interest" description="Disordered" evidence="3">
    <location>
        <begin position="1735"/>
        <end position="1772"/>
    </location>
</feature>
<feature type="region of interest" description="Disordered" evidence="3">
    <location>
        <begin position="1786"/>
        <end position="1864"/>
    </location>
</feature>
<feature type="region of interest" description="Disordered" evidence="3">
    <location>
        <begin position="1888"/>
        <end position="1916"/>
    </location>
</feature>
<feature type="compositionally biased region" description="Polar residues" evidence="3">
    <location>
        <begin position="724"/>
        <end position="740"/>
    </location>
</feature>
<feature type="compositionally biased region" description="Low complexity" evidence="3">
    <location>
        <begin position="754"/>
        <end position="789"/>
    </location>
</feature>
<feature type="compositionally biased region" description="Low complexity" evidence="3">
    <location>
        <begin position="835"/>
        <end position="857"/>
    </location>
</feature>
<feature type="compositionally biased region" description="Polar residues" evidence="3">
    <location>
        <begin position="1237"/>
        <end position="1249"/>
    </location>
</feature>
<feature type="compositionally biased region" description="Low complexity" evidence="3">
    <location>
        <begin position="1320"/>
        <end position="1351"/>
    </location>
</feature>
<feature type="compositionally biased region" description="Gly residues" evidence="3">
    <location>
        <begin position="1352"/>
        <end position="1377"/>
    </location>
</feature>
<feature type="compositionally biased region" description="Pro residues" evidence="3">
    <location>
        <begin position="1755"/>
        <end position="1764"/>
    </location>
</feature>
<feature type="compositionally biased region" description="Low complexity" evidence="3">
    <location>
        <begin position="1786"/>
        <end position="1813"/>
    </location>
</feature>
<feature type="compositionally biased region" description="Low complexity" evidence="3">
    <location>
        <begin position="1820"/>
        <end position="1835"/>
    </location>
</feature>
<feature type="compositionally biased region" description="Pro residues" evidence="3">
    <location>
        <begin position="1836"/>
        <end position="1859"/>
    </location>
</feature>
<feature type="compositionally biased region" description="Pro residues" evidence="3">
    <location>
        <begin position="1894"/>
        <end position="1908"/>
    </location>
</feature>
<feature type="splice variant" id="VSP_060925" description="In isoform B.">
    <location>
        <position position="94"/>
    </location>
</feature>
<feature type="splice variant" id="VSP_060926" description="In isoform C.">
    <original>K</original>
    <variation>KQRLDSCNLMTAVATATLATTTAAAGTSATAECKTTTVAASSSSNNSAGNHNNIGNSSSSGVITNNNSSSNGGNINIAISDSVNGHNHHHHHHHHRHHHLLDTPASSSVGLATATAAGGGGTAAAIPVAATPVSNTPATASSSASAAVAAAAAAAAASAAPSSVASYERSERRPPLLGAPPALSTVSNNNGRSGAAIAYHSLMPNFYPSTRQLHMHGHARGHAHPPQHGQPHPHQQPQPHSHPHAHPHPHPHPHQYQLQSLSHYHQQL</variation>
    <location>
        <position position="2103"/>
    </location>
</feature>
<feature type="sequence conflict" description="In Ref. 3; AAL25524." evidence="6" ref="3">
    <original>A</original>
    <variation>G</variation>
    <location>
        <position position="1791"/>
    </location>
</feature>
<proteinExistence type="evidence at transcript level"/>
<sequence length="2103" mass="223592">MDRFSFDDSIRFEEDSLCSWSSEPESLCNNWRGWKKPAAGSGAGNGGLSGMGGMAVAGGSGAPPFGGAGASGSCTPGGNGTAMANTSTCGRHYEVSTLAELAARCVASYIPFELVEHVYPPVPEQLQLRIAFWSFPDNEEDIRLYSCLANSSADEFNRGDSLFRLRAVKDPLQIGFHLSASVVNQTPRAYFNVAVTFDRRRISSCNCTCTSSAYWCSHVVAVCLHRIHCPQEVCLRAPVSESLTRLQRDQLQKFAQYLISELPQQILPTAQRLLDELLSAQPTAINTVCGAPDPTAGASINDQTSWYLDEKTLHNNIKRILIKFCLPAPIVFSDVNYLTNSAPPAAAEWSSLLRPLRGREPEGMWNLLSIVREMYRRCDRNAVRLLEIITEECLYCDQILIWWFQTKLALMMGSHGHSGGKHSNTHSNSTALQHACSSLCDEIVALWRLAALNPGLAPDERDMLHAQFTAWHLKILDRVVKSRMMPSYTNKHQQNSRSETELFIGFKPAIEACYLDWEGYPIPGVTHTHDTNPIYYSPFTCFKHTDLKGESNNPGQLNATQALMSNNKHYNYFSSSSDHGMHAGAFKQRLDRPFRESRFYTNPADLDGGAALAGGGSGRFSTGLGSVAVGGAGAGGLGQMSGGVNNSVGGSAAAEVNPVQQQLPSGSAGVGASVTNAKVVVATDGNRSSASSEGFCENDDFGGDTSSSHNYCPPGQAVVPGQKSALTESDSQSSFDAVSHQSKDEPPVGGVGVAVGVEQALSTSDTSSASSSSSSASTASGSSNSSTSSMLMAGQEATVGVGGAVQQTTRRLSKDESFSSSSDEFNQGGVGGSAGRVAMASSGSGSGAGDTVAVGSGSTAGGDLTPVPSTSAAARAALAASSTGPVISASPHLAASAAGGLGVLGVGADQPCTSSAHAARALAAAVAASSDKPHVFSNVRPTEDAWDILLARAEGLHAHGHGAEACILAVRLAEQMLANPPNLLLELPPAPKRKGKKQNVNPISHQLTVVASATLSKCAFLCTVLSENSEHYHIGFRICLFALEMPRPPASTKPLEVKLANQEADILALLKRLPLGSAELQVIRERAEQLRSGTFKTRGEALLPINLATFIFDALVTLSPLGGSTIVPGVASTSGVSSAAGKSMVNTGTRLLLYKHNSDESLGFDAAVAALGLKANVSEAEHPLLCEGTRRQRGDLALTLLSHYKDEPRKIAKIMEKLLDRDIHTLLNAPLLPAYYSSNPPVRTRSNQPTRREDHDYGGGSGCASSNCNPVANLCELLPADYGSVGGNSRPHSSTSAELELSMCALSMASSGSQSGGVQGMVPTTNAAGTTGTPSSSSTTVSGSQNPNGNPSGSGGGGNGGGGNGGGGGGGGGGGGSTSSRSKESRYKGKRAYPSIPNQPSEASAHFMFELAKNVLTKAGGNSSTSLFTQASTSQNHHGPHRALHMCAFQLGLYALGLHNCVSPNWLSRTYSSHVSWILGQAMEIGAPAISFLIDTWEAHLTPPEAAGMADRASRGWDSNMVYPAAELALSVLPHAAALNPNEIQRAILQCKEQSDLMLERACLTVETAAKGGGVYPEVLFQVARYWYELYMRNTPNNSEFEPHDDTMDHSAVSLSALIESQQQHELQQQQQAVQQQQAVQQQQQVVQQQQQVVQQQQQLGMPNSVVPGGVGPGPGLPVAVQPPVVGSVQNPQAQFQPVGVASLAPLGLAQYPPYSFCQGLYAHHHNMSYPPGQMQMFISAGPPPPPQAYGGYQQPPPQQPPNPQQQQQVVQQQVQQQQVVQQQQQQVQMAGQAPPGHPGQQGHPGQPPSGFQPQPPPGAFQALPPQAYQAMQAGPPGPPMGPPQGYYGPPPPPPPNGPPGVGVGVGVGVGVGVMPMRQHQHQHPVYPFMQQAPPQPPQQQQPPPSQPPVRQRQPHQFTPTQLRYLLAAYNVGMLAMETLARRVHDDRPQAKYARNPPYGEDVKWLLRISKKLGTQYLHQFCICAVNSIVSPFVLHDVAIESAHYLGRNNHQMVMQHLRSALTPLVQKCQQMYIQCIHQKLYHLTQGDYEEFASIVVAARAAFQITPEGNAQFKDWLQSIKRSKSCKKELWTQINAALQSNSK</sequence>